<comment type="function">
    <text evidence="1">Specifically methylates the cytosine at position 1962 (m5C1962) of 23S rRNA.</text>
</comment>
<comment type="catalytic activity">
    <reaction evidence="1">
        <text>cytidine(1962) in 23S rRNA + S-adenosyl-L-methionine = 5-methylcytidine(1962) in 23S rRNA + S-adenosyl-L-homocysteine + H(+)</text>
        <dbReference type="Rhea" id="RHEA:42912"/>
        <dbReference type="Rhea" id="RHEA-COMP:10382"/>
        <dbReference type="Rhea" id="RHEA-COMP:10386"/>
        <dbReference type="ChEBI" id="CHEBI:15378"/>
        <dbReference type="ChEBI" id="CHEBI:57856"/>
        <dbReference type="ChEBI" id="CHEBI:59789"/>
        <dbReference type="ChEBI" id="CHEBI:74483"/>
        <dbReference type="ChEBI" id="CHEBI:82748"/>
        <dbReference type="EC" id="2.1.1.191"/>
    </reaction>
</comment>
<comment type="subcellular location">
    <subcellularLocation>
        <location evidence="1">Cytoplasm</location>
    </subcellularLocation>
</comment>
<comment type="similarity">
    <text evidence="1">Belongs to the methyltransferase superfamily. RlmI family.</text>
</comment>
<comment type="sequence caution" evidence="2">
    <conflict type="erroneous initiation">
        <sequence resource="EMBL-CDS" id="ABF03198"/>
    </conflict>
</comment>
<organism>
    <name type="scientific">Shigella flexneri serotype 5b (strain 8401)</name>
    <dbReference type="NCBI Taxonomy" id="373384"/>
    <lineage>
        <taxon>Bacteria</taxon>
        <taxon>Pseudomonadati</taxon>
        <taxon>Pseudomonadota</taxon>
        <taxon>Gammaproteobacteria</taxon>
        <taxon>Enterobacterales</taxon>
        <taxon>Enterobacteriaceae</taxon>
        <taxon>Shigella</taxon>
    </lineage>
</organism>
<dbReference type="EC" id="2.1.1.191" evidence="1"/>
<dbReference type="EMBL" id="CP000266">
    <property type="protein sequence ID" value="ABF03198.1"/>
    <property type="status" value="ALT_INIT"/>
    <property type="molecule type" value="Genomic_DNA"/>
</dbReference>
<dbReference type="RefSeq" id="WP_000116282.1">
    <property type="nucleotide sequence ID" value="NC_008258.1"/>
</dbReference>
<dbReference type="SMR" id="Q0T667"/>
<dbReference type="KEGG" id="sfv:SFV_0977"/>
<dbReference type="HOGENOM" id="CLU_014042_0_0_6"/>
<dbReference type="Proteomes" id="UP000000659">
    <property type="component" value="Chromosome"/>
</dbReference>
<dbReference type="GO" id="GO:0005737">
    <property type="term" value="C:cytoplasm"/>
    <property type="evidence" value="ECO:0007669"/>
    <property type="project" value="UniProtKB-SubCell"/>
</dbReference>
<dbReference type="GO" id="GO:0003723">
    <property type="term" value="F:RNA binding"/>
    <property type="evidence" value="ECO:0007669"/>
    <property type="project" value="UniProtKB-KW"/>
</dbReference>
<dbReference type="GO" id="GO:0016434">
    <property type="term" value="F:rRNA (cytosine) methyltransferase activity"/>
    <property type="evidence" value="ECO:0007669"/>
    <property type="project" value="UniProtKB-UniRule"/>
</dbReference>
<dbReference type="CDD" id="cd02440">
    <property type="entry name" value="AdoMet_MTases"/>
    <property type="match status" value="1"/>
</dbReference>
<dbReference type="CDD" id="cd21153">
    <property type="entry name" value="PUA_RlmI"/>
    <property type="match status" value="1"/>
</dbReference>
<dbReference type="CDD" id="cd11572">
    <property type="entry name" value="RlmI_M_like"/>
    <property type="match status" value="1"/>
</dbReference>
<dbReference type="FunFam" id="2.30.130.10:FF:000005">
    <property type="entry name" value="Ribosomal RNA large subunit methyltransferase I"/>
    <property type="match status" value="1"/>
</dbReference>
<dbReference type="FunFam" id="3.30.750.80:FF:000002">
    <property type="entry name" value="Ribosomal RNA large subunit methyltransferase I"/>
    <property type="match status" value="1"/>
</dbReference>
<dbReference type="FunFam" id="3.40.50.150:FF:000044">
    <property type="entry name" value="Ribosomal RNA large subunit methyltransferase I"/>
    <property type="match status" value="1"/>
</dbReference>
<dbReference type="Gene3D" id="2.30.130.10">
    <property type="entry name" value="PUA domain"/>
    <property type="match status" value="1"/>
</dbReference>
<dbReference type="Gene3D" id="3.30.750.80">
    <property type="entry name" value="RNA methyltransferase domain (HRMD) like"/>
    <property type="match status" value="1"/>
</dbReference>
<dbReference type="Gene3D" id="3.40.50.150">
    <property type="entry name" value="Vaccinia Virus protein VP39"/>
    <property type="match status" value="1"/>
</dbReference>
<dbReference type="HAMAP" id="MF_01857">
    <property type="entry name" value="23SrRNA_methyltr_I"/>
    <property type="match status" value="1"/>
</dbReference>
<dbReference type="InterPro" id="IPR002478">
    <property type="entry name" value="PUA"/>
</dbReference>
<dbReference type="InterPro" id="IPR015947">
    <property type="entry name" value="PUA-like_sf"/>
</dbReference>
<dbReference type="InterPro" id="IPR036974">
    <property type="entry name" value="PUA_sf"/>
</dbReference>
<dbReference type="InterPro" id="IPR023542">
    <property type="entry name" value="RLMI"/>
</dbReference>
<dbReference type="InterPro" id="IPR041532">
    <property type="entry name" value="RlmI-like_PUA"/>
</dbReference>
<dbReference type="InterPro" id="IPR019614">
    <property type="entry name" value="SAM-dep_methyl-trfase"/>
</dbReference>
<dbReference type="InterPro" id="IPR029063">
    <property type="entry name" value="SAM-dependent_MTases_sf"/>
</dbReference>
<dbReference type="NCBIfam" id="NF011707">
    <property type="entry name" value="PRK15128.1"/>
    <property type="match status" value="1"/>
</dbReference>
<dbReference type="PANTHER" id="PTHR42873">
    <property type="entry name" value="RIBOSOMAL RNA LARGE SUBUNIT METHYLTRANSFERASE"/>
    <property type="match status" value="1"/>
</dbReference>
<dbReference type="PANTHER" id="PTHR42873:SF1">
    <property type="entry name" value="S-ADENOSYLMETHIONINE-DEPENDENT METHYLTRANSFERASE DOMAIN-CONTAINING PROTEIN"/>
    <property type="match status" value="1"/>
</dbReference>
<dbReference type="Pfam" id="PF10672">
    <property type="entry name" value="Methyltrans_SAM"/>
    <property type="match status" value="1"/>
</dbReference>
<dbReference type="Pfam" id="PF17785">
    <property type="entry name" value="PUA_3"/>
    <property type="match status" value="1"/>
</dbReference>
<dbReference type="SMART" id="SM00359">
    <property type="entry name" value="PUA"/>
    <property type="match status" value="1"/>
</dbReference>
<dbReference type="SUPFAM" id="SSF88697">
    <property type="entry name" value="PUA domain-like"/>
    <property type="match status" value="1"/>
</dbReference>
<dbReference type="SUPFAM" id="SSF53335">
    <property type="entry name" value="S-adenosyl-L-methionine-dependent methyltransferases"/>
    <property type="match status" value="1"/>
</dbReference>
<dbReference type="PROSITE" id="PS50890">
    <property type="entry name" value="PUA"/>
    <property type="match status" value="1"/>
</dbReference>
<reference key="1">
    <citation type="journal article" date="2006" name="BMC Genomics">
        <title>Complete genome sequence of Shigella flexneri 5b and comparison with Shigella flexneri 2a.</title>
        <authorList>
            <person name="Nie H."/>
            <person name="Yang F."/>
            <person name="Zhang X."/>
            <person name="Yang J."/>
            <person name="Chen L."/>
            <person name="Wang J."/>
            <person name="Xiong Z."/>
            <person name="Peng J."/>
            <person name="Sun L."/>
            <person name="Dong J."/>
            <person name="Xue Y."/>
            <person name="Xu X."/>
            <person name="Chen S."/>
            <person name="Yao Z."/>
            <person name="Shen Y."/>
            <person name="Jin Q."/>
        </authorList>
    </citation>
    <scope>NUCLEOTIDE SEQUENCE [LARGE SCALE GENOMIC DNA]</scope>
    <source>
        <strain>8401</strain>
    </source>
</reference>
<evidence type="ECO:0000255" key="1">
    <source>
        <dbReference type="HAMAP-Rule" id="MF_01857"/>
    </source>
</evidence>
<evidence type="ECO:0000305" key="2"/>
<keyword id="KW-0963">Cytoplasm</keyword>
<keyword id="KW-0489">Methyltransferase</keyword>
<keyword id="KW-0694">RNA-binding</keyword>
<keyword id="KW-0698">rRNA processing</keyword>
<keyword id="KW-0949">S-adenosyl-L-methionine</keyword>
<keyword id="KW-0808">Transferase</keyword>
<sequence>MSVRLVLAKGREKSLLRRHPWVFSGAVARMEGKASLGETIDIVDHQGKWLARGAYSPASQIRARVWTFDPSESIDIAFFSRRLQQAQKWRDWLAQKDGLDSYRLIAGESDGLPGITIDRFGNFLVLQLLSAGAEYQRAALISALQTLYPECAIYDRSDVAVRKKEGMELTQGLVTGELPPALLPIEEHGMKLLVDIHHGHKTAYYLDQRDSRLATRRYVENKRVLNCFSYTGGFAVSALMGGCSQVVSVDTSQEALDIARQNVELNKLDLSKAEFVRDDVFKLLRTYRDRGEKFDVIVMDPPKFVENKSQLMGACRGYKDINMLAIQLLNEGGILLTFSCSGLMTSDLFQKIIADAAIDAGRDVQFIEQFRQAADHPVIATYPEGLYLKGFACRVM</sequence>
<name>RLMI_SHIF8</name>
<feature type="chain" id="PRO_0000366270" description="Ribosomal RNA large subunit methyltransferase I">
    <location>
        <begin position="1"/>
        <end position="396"/>
    </location>
</feature>
<feature type="domain" description="PUA" evidence="1">
    <location>
        <begin position="2"/>
        <end position="81"/>
    </location>
</feature>
<accession>Q0T667</accession>
<gene>
    <name evidence="1" type="primary">rlmI</name>
    <name type="ordered locus">SFV_0977</name>
</gene>
<proteinExistence type="inferred from homology"/>
<protein>
    <recommendedName>
        <fullName evidence="1">Ribosomal RNA large subunit methyltransferase I</fullName>
        <ecNumber evidence="1">2.1.1.191</ecNumber>
    </recommendedName>
    <alternativeName>
        <fullName evidence="1">23S rRNA m5C1962 methyltransferase</fullName>
    </alternativeName>
    <alternativeName>
        <fullName evidence="1">rRNA (cytosine-C(5)-)-methyltransferase RlmI</fullName>
    </alternativeName>
</protein>